<keyword id="KW-0249">Electron transport</keyword>
<keyword id="KW-0472">Membrane</keyword>
<keyword id="KW-0496">Mitochondrion</keyword>
<keyword id="KW-0999">Mitochondrion inner membrane</keyword>
<keyword id="KW-0520">NAD</keyword>
<keyword id="KW-0679">Respiratory chain</keyword>
<keyword id="KW-1278">Translocase</keyword>
<keyword id="KW-0812">Transmembrane</keyword>
<keyword id="KW-1133">Transmembrane helix</keyword>
<keyword id="KW-0813">Transport</keyword>
<keyword id="KW-0830">Ubiquinone</keyword>
<comment type="function">
    <text evidence="1">Core subunit of the mitochondrial membrane respiratory chain NADH dehydrogenase (Complex I) which catalyzes electron transfer from NADH through the respiratory chain, using ubiquinone as an electron acceptor. Essential for the catalytic activity and assembly of complex I.</text>
</comment>
<comment type="catalytic activity">
    <reaction evidence="1">
        <text>a ubiquinone + NADH + 5 H(+)(in) = a ubiquinol + NAD(+) + 4 H(+)(out)</text>
        <dbReference type="Rhea" id="RHEA:29091"/>
        <dbReference type="Rhea" id="RHEA-COMP:9565"/>
        <dbReference type="Rhea" id="RHEA-COMP:9566"/>
        <dbReference type="ChEBI" id="CHEBI:15378"/>
        <dbReference type="ChEBI" id="CHEBI:16389"/>
        <dbReference type="ChEBI" id="CHEBI:17976"/>
        <dbReference type="ChEBI" id="CHEBI:57540"/>
        <dbReference type="ChEBI" id="CHEBI:57945"/>
        <dbReference type="EC" id="7.1.1.2"/>
    </reaction>
</comment>
<comment type="subunit">
    <text evidence="1 2">Core subunit of respiratory chain NADH dehydrogenase (Complex I) which is composed of 45 different subunits. Interacts with TMEM242 (By similarity).</text>
</comment>
<comment type="subcellular location">
    <subcellularLocation>
        <location evidence="2">Mitochondrion inner membrane</location>
        <topology evidence="3">Multi-pass membrane protein</topology>
    </subcellularLocation>
</comment>
<comment type="similarity">
    <text evidence="4">Belongs to the complex I subunit 2 family.</text>
</comment>
<reference key="1">
    <citation type="submission" date="2003-12" db="EMBL/GenBank/DDBJ databases">
        <title>Bats and birds: flying in the face of mtDNA evolutionary rates.</title>
        <authorList>
            <person name="Worthington Wilmer J.M."/>
            <person name="Schneider C.J."/>
            <person name="Sorenson M.D."/>
        </authorList>
    </citation>
    <scope>NUCLEOTIDE SEQUENCE [GENOMIC DNA]</scope>
    <source>
        <strain>Isolate 1</strain>
    </source>
</reference>
<feature type="chain" id="PRO_0000256669" description="NADH-ubiquinone oxidoreductase chain 2">
    <location>
        <begin position="1"/>
        <end position="347"/>
    </location>
</feature>
<feature type="transmembrane region" description="Helical" evidence="3">
    <location>
        <begin position="13"/>
        <end position="33"/>
    </location>
</feature>
<feature type="transmembrane region" description="Helical" evidence="3">
    <location>
        <begin position="59"/>
        <end position="79"/>
    </location>
</feature>
<feature type="transmembrane region" description="Helical" evidence="3">
    <location>
        <begin position="96"/>
        <end position="116"/>
    </location>
</feature>
<feature type="transmembrane region" description="Helical" evidence="3">
    <location>
        <begin position="122"/>
        <end position="142"/>
    </location>
</feature>
<feature type="transmembrane region" description="Helical" evidence="3">
    <location>
        <begin position="149"/>
        <end position="169"/>
    </location>
</feature>
<feature type="transmembrane region" description="Helical" evidence="3">
    <location>
        <begin position="178"/>
        <end position="198"/>
    </location>
</feature>
<feature type="transmembrane region" description="Helical" evidence="3">
    <location>
        <begin position="200"/>
        <end position="220"/>
    </location>
</feature>
<feature type="transmembrane region" description="Helical" evidence="3">
    <location>
        <begin position="240"/>
        <end position="260"/>
    </location>
</feature>
<feature type="transmembrane region" description="Helical" evidence="3">
    <location>
        <begin position="276"/>
        <end position="296"/>
    </location>
</feature>
<feature type="transmembrane region" description="Helical" evidence="3">
    <location>
        <begin position="325"/>
        <end position="345"/>
    </location>
</feature>
<evidence type="ECO:0000250" key="1">
    <source>
        <dbReference type="UniProtKB" id="P03891"/>
    </source>
</evidence>
<evidence type="ECO:0000250" key="2">
    <source>
        <dbReference type="UniProtKB" id="P03892"/>
    </source>
</evidence>
<evidence type="ECO:0000255" key="3"/>
<evidence type="ECO:0000305" key="4"/>
<protein>
    <recommendedName>
        <fullName evidence="1">NADH-ubiquinone oxidoreductase chain 2</fullName>
        <ecNumber evidence="1">7.1.1.2</ecNumber>
    </recommendedName>
    <alternativeName>
        <fullName>NADH dehydrogenase subunit 2</fullName>
    </alternativeName>
</protein>
<organism>
    <name type="scientific">Molossus ater</name>
    <name type="common">Black mastiff bat</name>
    <dbReference type="NCBI Taxonomy" id="270771"/>
    <lineage>
        <taxon>Eukaryota</taxon>
        <taxon>Metazoa</taxon>
        <taxon>Chordata</taxon>
        <taxon>Craniata</taxon>
        <taxon>Vertebrata</taxon>
        <taxon>Euteleostomi</taxon>
        <taxon>Mammalia</taxon>
        <taxon>Eutheria</taxon>
        <taxon>Laurasiatheria</taxon>
        <taxon>Chiroptera</taxon>
        <taxon>Yangochiroptera</taxon>
        <taxon>Molossidae</taxon>
        <taxon>Molossus</taxon>
    </lineage>
</organism>
<name>NU2M_MOLAE</name>
<proteinExistence type="inferred from homology"/>
<sequence length="347" mass="39055">MNPLIMTTILTTVILGTLIVMMSSHWLLIWIGFEMNMLAIIPMLMKQHNPRSTEAATKYFFTQATASMLLMLAVLLNLMYSGQWTVMKLYNPTASMIMTMALTMKLGLAPFHFWVPEVTQGIPLSSGLILLTWQKLAPLTVLYTISPNINLTMLLTMSIASIAIGGWGGLNQTQLRKIMAYSSIAHMGWMTTILIYNPTMTLLNLVIYILMTTTMFMLFMTSSSTTTLSLSHMWNKTPMIVTITLATLLSLGGLPPLTGFMPKWMIIQELTKNNNIILPTIMAITALLNLFFYMRLTYATSLTMFPTTNNMKIKWQFENPKRLSLLTPMIVLSTLTLPPTPMIIILN</sequence>
<geneLocation type="mitochondrion"/>
<dbReference type="EC" id="7.1.1.2" evidence="1"/>
<dbReference type="EMBL" id="AY504548">
    <property type="protein sequence ID" value="AAS91413.1"/>
    <property type="molecule type" value="Genomic_DNA"/>
</dbReference>
<dbReference type="SMR" id="Q330E4"/>
<dbReference type="GO" id="GO:0005743">
    <property type="term" value="C:mitochondrial inner membrane"/>
    <property type="evidence" value="ECO:0000250"/>
    <property type="project" value="UniProtKB"/>
</dbReference>
<dbReference type="GO" id="GO:0008137">
    <property type="term" value="F:NADH dehydrogenase (ubiquinone) activity"/>
    <property type="evidence" value="ECO:0000250"/>
    <property type="project" value="UniProtKB"/>
</dbReference>
<dbReference type="GO" id="GO:0006120">
    <property type="term" value="P:mitochondrial electron transport, NADH to ubiquinone"/>
    <property type="evidence" value="ECO:0000250"/>
    <property type="project" value="UniProtKB"/>
</dbReference>
<dbReference type="GO" id="GO:0032981">
    <property type="term" value="P:mitochondrial respiratory chain complex I assembly"/>
    <property type="evidence" value="ECO:0000250"/>
    <property type="project" value="UniProtKB"/>
</dbReference>
<dbReference type="InterPro" id="IPR050175">
    <property type="entry name" value="Complex_I_Subunit_2"/>
</dbReference>
<dbReference type="InterPro" id="IPR010933">
    <property type="entry name" value="NADH_DH_su2_C"/>
</dbReference>
<dbReference type="InterPro" id="IPR003917">
    <property type="entry name" value="NADH_UbQ_OxRdtase_chain2"/>
</dbReference>
<dbReference type="InterPro" id="IPR001750">
    <property type="entry name" value="ND/Mrp_TM"/>
</dbReference>
<dbReference type="PANTHER" id="PTHR46552">
    <property type="entry name" value="NADH-UBIQUINONE OXIDOREDUCTASE CHAIN 2"/>
    <property type="match status" value="1"/>
</dbReference>
<dbReference type="PANTHER" id="PTHR46552:SF1">
    <property type="entry name" value="NADH-UBIQUINONE OXIDOREDUCTASE CHAIN 2"/>
    <property type="match status" value="1"/>
</dbReference>
<dbReference type="Pfam" id="PF06444">
    <property type="entry name" value="NADH_dehy_S2_C"/>
    <property type="match status" value="1"/>
</dbReference>
<dbReference type="Pfam" id="PF00361">
    <property type="entry name" value="Proton_antipo_M"/>
    <property type="match status" value="1"/>
</dbReference>
<dbReference type="PRINTS" id="PR01436">
    <property type="entry name" value="NADHDHGNASE2"/>
</dbReference>
<accession>Q330E4</accession>
<gene>
    <name evidence="1" type="primary">MT-ND2</name>
    <name type="synonym">MTND2</name>
    <name type="synonym">NADH2</name>
    <name type="synonym">ND2</name>
</gene>